<name>RS3_BIFA0</name>
<keyword id="KW-1185">Reference proteome</keyword>
<keyword id="KW-0687">Ribonucleoprotein</keyword>
<keyword id="KW-0689">Ribosomal protein</keyword>
<keyword id="KW-0694">RNA-binding</keyword>
<keyword id="KW-0699">rRNA-binding</keyword>
<evidence type="ECO:0000255" key="1">
    <source>
        <dbReference type="HAMAP-Rule" id="MF_01309"/>
    </source>
</evidence>
<evidence type="ECO:0000256" key="2">
    <source>
        <dbReference type="SAM" id="MobiDB-lite"/>
    </source>
</evidence>
<evidence type="ECO:0000305" key="3"/>
<organism>
    <name type="scientific">Bifidobacterium animalis subsp. lactis (strain AD011)</name>
    <dbReference type="NCBI Taxonomy" id="442563"/>
    <lineage>
        <taxon>Bacteria</taxon>
        <taxon>Bacillati</taxon>
        <taxon>Actinomycetota</taxon>
        <taxon>Actinomycetes</taxon>
        <taxon>Bifidobacteriales</taxon>
        <taxon>Bifidobacteriaceae</taxon>
        <taxon>Bifidobacterium</taxon>
    </lineage>
</organism>
<comment type="function">
    <text evidence="1">Binds the lower part of the 30S subunit head. Binds mRNA in the 70S ribosome, positioning it for translation.</text>
</comment>
<comment type="subunit">
    <text evidence="1">Part of the 30S ribosomal subunit. Forms a tight complex with proteins S10 and S14.</text>
</comment>
<comment type="similarity">
    <text evidence="1">Belongs to the universal ribosomal protein uS3 family.</text>
</comment>
<reference key="1">
    <citation type="journal article" date="2009" name="J. Bacteriol.">
        <title>Genome sequence of the probiotic bacterium Bifidobacterium animalis subsp. lactis AD011.</title>
        <authorList>
            <person name="Kim J.F."/>
            <person name="Jeong H."/>
            <person name="Yu D.S."/>
            <person name="Choi S.-H."/>
            <person name="Hur C.-G."/>
            <person name="Park M.-S."/>
            <person name="Yoon S.H."/>
            <person name="Kim D.-W."/>
            <person name="Ji G.E."/>
            <person name="Park H.-S."/>
            <person name="Oh T.K."/>
        </authorList>
    </citation>
    <scope>NUCLEOTIDE SEQUENCE [LARGE SCALE GENOMIC DNA]</scope>
    <source>
        <strain>AD011</strain>
    </source>
</reference>
<sequence>MGQKINPFGYRLGITESHRSKWFSDSNKVGERYRDFVLEDDAIRKVMNKDLERAGVSRIIIERTRDRVRVDIHTARPGIVIGRRGAEAERVRAKLEKLTGKQVQLNIFEVKNPAIDAQLVAQGIAEQLTNRVTFRRAMRKAQQDAMRAGAKGIRIKLSGRLGGAEMSRSEFYREGRVPLQTLRALIDYGFFEAKTTYGRIGVKVWIYKGDMTEREFEEQQAQQGNNRPGRRGGDRRPRRGQRAGQRPTGQNQVKTGPDQQMEAEVSKEAAVEPETKE</sequence>
<accession>B8DW19</accession>
<feature type="chain" id="PRO_1000165477" description="Small ribosomal subunit protein uS3">
    <location>
        <begin position="1"/>
        <end position="277"/>
    </location>
</feature>
<feature type="domain" description="KH type-2" evidence="1">
    <location>
        <begin position="43"/>
        <end position="111"/>
    </location>
</feature>
<feature type="region of interest" description="Disordered" evidence="2">
    <location>
        <begin position="216"/>
        <end position="277"/>
    </location>
</feature>
<feature type="compositionally biased region" description="Basic and acidic residues" evidence="2">
    <location>
        <begin position="264"/>
        <end position="277"/>
    </location>
</feature>
<dbReference type="EMBL" id="CP001213">
    <property type="protein sequence ID" value="ACL28670.1"/>
    <property type="molecule type" value="Genomic_DNA"/>
</dbReference>
<dbReference type="RefSeq" id="WP_004268583.1">
    <property type="nucleotide sequence ID" value="NC_011835.1"/>
</dbReference>
<dbReference type="SMR" id="B8DW19"/>
<dbReference type="STRING" id="442563.BLA_0368"/>
<dbReference type="GeneID" id="29696058"/>
<dbReference type="KEGG" id="bla:BLA_0368"/>
<dbReference type="HOGENOM" id="CLU_058591_0_2_11"/>
<dbReference type="Proteomes" id="UP000002456">
    <property type="component" value="Chromosome"/>
</dbReference>
<dbReference type="GO" id="GO:0022627">
    <property type="term" value="C:cytosolic small ribosomal subunit"/>
    <property type="evidence" value="ECO:0007669"/>
    <property type="project" value="TreeGrafter"/>
</dbReference>
<dbReference type="GO" id="GO:0003729">
    <property type="term" value="F:mRNA binding"/>
    <property type="evidence" value="ECO:0007669"/>
    <property type="project" value="UniProtKB-UniRule"/>
</dbReference>
<dbReference type="GO" id="GO:0019843">
    <property type="term" value="F:rRNA binding"/>
    <property type="evidence" value="ECO:0007669"/>
    <property type="project" value="UniProtKB-UniRule"/>
</dbReference>
<dbReference type="GO" id="GO:0003735">
    <property type="term" value="F:structural constituent of ribosome"/>
    <property type="evidence" value="ECO:0007669"/>
    <property type="project" value="InterPro"/>
</dbReference>
<dbReference type="GO" id="GO:0006412">
    <property type="term" value="P:translation"/>
    <property type="evidence" value="ECO:0007669"/>
    <property type="project" value="UniProtKB-UniRule"/>
</dbReference>
<dbReference type="CDD" id="cd02412">
    <property type="entry name" value="KH-II_30S_S3"/>
    <property type="match status" value="1"/>
</dbReference>
<dbReference type="FunFam" id="3.30.1140.32:FF:000002">
    <property type="entry name" value="30S ribosomal protein S3"/>
    <property type="match status" value="1"/>
</dbReference>
<dbReference type="FunFam" id="3.30.300.20:FF:000001">
    <property type="entry name" value="30S ribosomal protein S3"/>
    <property type="match status" value="1"/>
</dbReference>
<dbReference type="Gene3D" id="3.30.300.20">
    <property type="match status" value="1"/>
</dbReference>
<dbReference type="Gene3D" id="3.30.1140.32">
    <property type="entry name" value="Ribosomal protein S3, C-terminal domain"/>
    <property type="match status" value="1"/>
</dbReference>
<dbReference type="HAMAP" id="MF_01309_B">
    <property type="entry name" value="Ribosomal_uS3_B"/>
    <property type="match status" value="1"/>
</dbReference>
<dbReference type="InterPro" id="IPR004087">
    <property type="entry name" value="KH_dom"/>
</dbReference>
<dbReference type="InterPro" id="IPR015946">
    <property type="entry name" value="KH_dom-like_a/b"/>
</dbReference>
<dbReference type="InterPro" id="IPR004044">
    <property type="entry name" value="KH_dom_type_2"/>
</dbReference>
<dbReference type="InterPro" id="IPR009019">
    <property type="entry name" value="KH_sf_prok-type"/>
</dbReference>
<dbReference type="InterPro" id="IPR036419">
    <property type="entry name" value="Ribosomal_S3_C_sf"/>
</dbReference>
<dbReference type="InterPro" id="IPR005704">
    <property type="entry name" value="Ribosomal_uS3_bac-typ"/>
</dbReference>
<dbReference type="InterPro" id="IPR001351">
    <property type="entry name" value="Ribosomal_uS3_C"/>
</dbReference>
<dbReference type="InterPro" id="IPR018280">
    <property type="entry name" value="Ribosomal_uS3_CS"/>
</dbReference>
<dbReference type="NCBIfam" id="TIGR01009">
    <property type="entry name" value="rpsC_bact"/>
    <property type="match status" value="1"/>
</dbReference>
<dbReference type="PANTHER" id="PTHR11760">
    <property type="entry name" value="30S/40S RIBOSOMAL PROTEIN S3"/>
    <property type="match status" value="1"/>
</dbReference>
<dbReference type="PANTHER" id="PTHR11760:SF19">
    <property type="entry name" value="SMALL RIBOSOMAL SUBUNIT PROTEIN US3C"/>
    <property type="match status" value="1"/>
</dbReference>
<dbReference type="Pfam" id="PF07650">
    <property type="entry name" value="KH_2"/>
    <property type="match status" value="1"/>
</dbReference>
<dbReference type="Pfam" id="PF00189">
    <property type="entry name" value="Ribosomal_S3_C"/>
    <property type="match status" value="1"/>
</dbReference>
<dbReference type="SMART" id="SM00322">
    <property type="entry name" value="KH"/>
    <property type="match status" value="1"/>
</dbReference>
<dbReference type="SUPFAM" id="SSF54814">
    <property type="entry name" value="Prokaryotic type KH domain (KH-domain type II)"/>
    <property type="match status" value="1"/>
</dbReference>
<dbReference type="SUPFAM" id="SSF54821">
    <property type="entry name" value="Ribosomal protein S3 C-terminal domain"/>
    <property type="match status" value="1"/>
</dbReference>
<dbReference type="PROSITE" id="PS50823">
    <property type="entry name" value="KH_TYPE_2"/>
    <property type="match status" value="1"/>
</dbReference>
<dbReference type="PROSITE" id="PS00548">
    <property type="entry name" value="RIBOSOMAL_S3"/>
    <property type="match status" value="1"/>
</dbReference>
<gene>
    <name evidence="1" type="primary">rpsC</name>
    <name type="ordered locus">BLA_0368</name>
</gene>
<protein>
    <recommendedName>
        <fullName evidence="1">Small ribosomal subunit protein uS3</fullName>
    </recommendedName>
    <alternativeName>
        <fullName evidence="3">30S ribosomal protein S3</fullName>
    </alternativeName>
</protein>
<proteinExistence type="inferred from homology"/>